<name>RS15_STRGC</name>
<reference key="1">
    <citation type="journal article" date="2007" name="J. Bacteriol.">
        <title>Genome-wide transcriptional changes in Streptococcus gordonii in response to competence signaling peptide.</title>
        <authorList>
            <person name="Vickerman M.M."/>
            <person name="Iobst S."/>
            <person name="Jesionowski A.M."/>
            <person name="Gill S.R."/>
        </authorList>
    </citation>
    <scope>NUCLEOTIDE SEQUENCE [LARGE SCALE GENOMIC DNA]</scope>
    <source>
        <strain>Challis / ATCC 35105 / BCRC 15272 / CH1 / DL1 / V288</strain>
    </source>
</reference>
<feature type="chain" id="PRO_1000086826" description="Small ribosomal subunit protein uS15">
    <location>
        <begin position="1"/>
        <end position="89"/>
    </location>
</feature>
<organism>
    <name type="scientific">Streptococcus gordonii (strain Challis / ATCC 35105 / BCRC 15272 / CH1 / DL1 / V288)</name>
    <dbReference type="NCBI Taxonomy" id="467705"/>
    <lineage>
        <taxon>Bacteria</taxon>
        <taxon>Bacillati</taxon>
        <taxon>Bacillota</taxon>
        <taxon>Bacilli</taxon>
        <taxon>Lactobacillales</taxon>
        <taxon>Streptococcaceae</taxon>
        <taxon>Streptococcus</taxon>
    </lineage>
</organism>
<dbReference type="EMBL" id="CP000725">
    <property type="protein sequence ID" value="ABV09632.1"/>
    <property type="molecule type" value="Genomic_DNA"/>
</dbReference>
<dbReference type="RefSeq" id="WP_004193424.1">
    <property type="nucleotide sequence ID" value="NC_009785.1"/>
</dbReference>
<dbReference type="SMR" id="A8AV42"/>
<dbReference type="STRING" id="467705.SGO_0333"/>
<dbReference type="GeneID" id="93922516"/>
<dbReference type="KEGG" id="sgo:SGO_0333"/>
<dbReference type="eggNOG" id="COG0184">
    <property type="taxonomic scope" value="Bacteria"/>
</dbReference>
<dbReference type="HOGENOM" id="CLU_148518_0_0_9"/>
<dbReference type="Proteomes" id="UP000001131">
    <property type="component" value="Chromosome"/>
</dbReference>
<dbReference type="GO" id="GO:0022627">
    <property type="term" value="C:cytosolic small ribosomal subunit"/>
    <property type="evidence" value="ECO:0007669"/>
    <property type="project" value="TreeGrafter"/>
</dbReference>
<dbReference type="GO" id="GO:0019843">
    <property type="term" value="F:rRNA binding"/>
    <property type="evidence" value="ECO:0007669"/>
    <property type="project" value="UniProtKB-UniRule"/>
</dbReference>
<dbReference type="GO" id="GO:0003735">
    <property type="term" value="F:structural constituent of ribosome"/>
    <property type="evidence" value="ECO:0007669"/>
    <property type="project" value="InterPro"/>
</dbReference>
<dbReference type="GO" id="GO:0006412">
    <property type="term" value="P:translation"/>
    <property type="evidence" value="ECO:0007669"/>
    <property type="project" value="UniProtKB-UniRule"/>
</dbReference>
<dbReference type="CDD" id="cd00353">
    <property type="entry name" value="Ribosomal_S15p_S13e"/>
    <property type="match status" value="1"/>
</dbReference>
<dbReference type="FunFam" id="1.10.287.10:FF:000002">
    <property type="entry name" value="30S ribosomal protein S15"/>
    <property type="match status" value="1"/>
</dbReference>
<dbReference type="Gene3D" id="6.10.250.3130">
    <property type="match status" value="1"/>
</dbReference>
<dbReference type="Gene3D" id="1.10.287.10">
    <property type="entry name" value="S15/NS1, RNA-binding"/>
    <property type="match status" value="1"/>
</dbReference>
<dbReference type="HAMAP" id="MF_01343_B">
    <property type="entry name" value="Ribosomal_uS15_B"/>
    <property type="match status" value="1"/>
</dbReference>
<dbReference type="InterPro" id="IPR000589">
    <property type="entry name" value="Ribosomal_uS15"/>
</dbReference>
<dbReference type="InterPro" id="IPR005290">
    <property type="entry name" value="Ribosomal_uS15_bac-type"/>
</dbReference>
<dbReference type="InterPro" id="IPR009068">
    <property type="entry name" value="uS15_NS1_RNA-bd_sf"/>
</dbReference>
<dbReference type="NCBIfam" id="TIGR00952">
    <property type="entry name" value="S15_bact"/>
    <property type="match status" value="1"/>
</dbReference>
<dbReference type="PANTHER" id="PTHR23321">
    <property type="entry name" value="RIBOSOMAL PROTEIN S15, BACTERIAL AND ORGANELLAR"/>
    <property type="match status" value="1"/>
</dbReference>
<dbReference type="PANTHER" id="PTHR23321:SF26">
    <property type="entry name" value="SMALL RIBOSOMAL SUBUNIT PROTEIN US15M"/>
    <property type="match status" value="1"/>
</dbReference>
<dbReference type="Pfam" id="PF00312">
    <property type="entry name" value="Ribosomal_S15"/>
    <property type="match status" value="1"/>
</dbReference>
<dbReference type="SMART" id="SM01387">
    <property type="entry name" value="Ribosomal_S15"/>
    <property type="match status" value="1"/>
</dbReference>
<dbReference type="SUPFAM" id="SSF47060">
    <property type="entry name" value="S15/NS1 RNA-binding domain"/>
    <property type="match status" value="1"/>
</dbReference>
<dbReference type="PROSITE" id="PS00362">
    <property type="entry name" value="RIBOSOMAL_S15"/>
    <property type="match status" value="1"/>
</dbReference>
<gene>
    <name evidence="1" type="primary">rpsO</name>
    <name type="ordered locus">SGO_0333</name>
</gene>
<keyword id="KW-1185">Reference proteome</keyword>
<keyword id="KW-0687">Ribonucleoprotein</keyword>
<keyword id="KW-0689">Ribosomal protein</keyword>
<keyword id="KW-0694">RNA-binding</keyword>
<keyword id="KW-0699">rRNA-binding</keyword>
<accession>A8AV42</accession>
<comment type="function">
    <text evidence="1">One of the primary rRNA binding proteins, it binds directly to 16S rRNA where it helps nucleate assembly of the platform of the 30S subunit by binding and bridging several RNA helices of the 16S rRNA.</text>
</comment>
<comment type="function">
    <text evidence="1">Forms an intersubunit bridge (bridge B4) with the 23S rRNA of the 50S subunit in the ribosome.</text>
</comment>
<comment type="subunit">
    <text evidence="1">Part of the 30S ribosomal subunit. Forms a bridge to the 50S subunit in the 70S ribosome, contacting the 23S rRNA.</text>
</comment>
<comment type="similarity">
    <text evidence="1">Belongs to the universal ribosomal protein uS15 family.</text>
</comment>
<protein>
    <recommendedName>
        <fullName evidence="1">Small ribosomal subunit protein uS15</fullName>
    </recommendedName>
    <alternativeName>
        <fullName evidence="2">30S ribosomal protein S15</fullName>
    </alternativeName>
</protein>
<sequence length="89" mass="10521">MAISKEKKNEIIAQYARHEGDTGSVEVQVAVLTWEINHLNDHIKQHKKDHATYRGLMKKIGRRRNLLAYLRKNDVNRYRELINSLGLRR</sequence>
<evidence type="ECO:0000255" key="1">
    <source>
        <dbReference type="HAMAP-Rule" id="MF_01343"/>
    </source>
</evidence>
<evidence type="ECO:0000305" key="2"/>
<proteinExistence type="inferred from homology"/>